<accession>B7MNN4</accession>
<sequence length="316" mass="34719">MQILLANPRGFCAGVDRAISIVENALAIYGAPIYVRHEVVHNRYVVDSLRERGAIFIEQISEVPDGAILIFSAHGVSQAVRNEAKSRDLTVFDATCPLVTKVHMEVARASRRGEESILIGHAGHPEVEGTMGQYSNPEGGMYLVESPDDVWKLTVKNEEKLSFMTQTTLSVDDTSDVIDALRKRFPKIVGPRKDDICYATTNRQEAVRALAEQAEVVLVVGSKNSSNSNRLAELAQRMGKRAFLIDDATDIQEEWVKEAKCVGVTAGASAPDILVQNVVARLQQLGGGEAIPLEGREENIVFEVPKELRVDIREVD</sequence>
<name>ISPH_ECO81</name>
<gene>
    <name evidence="1" type="primary">ispH</name>
    <name type="ordered locus">ECED1_0026</name>
</gene>
<dbReference type="EC" id="1.17.7.4" evidence="1"/>
<dbReference type="EMBL" id="CU928162">
    <property type="protein sequence ID" value="CAR06249.1"/>
    <property type="molecule type" value="Genomic_DNA"/>
</dbReference>
<dbReference type="RefSeq" id="WP_001166403.1">
    <property type="nucleotide sequence ID" value="NC_011745.1"/>
</dbReference>
<dbReference type="SMR" id="B7MNN4"/>
<dbReference type="KEGG" id="ecq:ECED1_0026"/>
<dbReference type="HOGENOM" id="CLU_027486_1_0_6"/>
<dbReference type="UniPathway" id="UPA00056">
    <property type="reaction ID" value="UER00097"/>
</dbReference>
<dbReference type="UniPathway" id="UPA00059">
    <property type="reaction ID" value="UER00105"/>
</dbReference>
<dbReference type="Proteomes" id="UP000000748">
    <property type="component" value="Chromosome"/>
</dbReference>
<dbReference type="GO" id="GO:0051539">
    <property type="term" value="F:4 iron, 4 sulfur cluster binding"/>
    <property type="evidence" value="ECO:0007669"/>
    <property type="project" value="UniProtKB-UniRule"/>
</dbReference>
<dbReference type="GO" id="GO:0051745">
    <property type="term" value="F:4-hydroxy-3-methylbut-2-enyl diphosphate reductase activity"/>
    <property type="evidence" value="ECO:0007669"/>
    <property type="project" value="UniProtKB-UniRule"/>
</dbReference>
<dbReference type="GO" id="GO:0046872">
    <property type="term" value="F:metal ion binding"/>
    <property type="evidence" value="ECO:0007669"/>
    <property type="project" value="UniProtKB-KW"/>
</dbReference>
<dbReference type="GO" id="GO:0050992">
    <property type="term" value="P:dimethylallyl diphosphate biosynthetic process"/>
    <property type="evidence" value="ECO:0007669"/>
    <property type="project" value="UniProtKB-UniRule"/>
</dbReference>
<dbReference type="GO" id="GO:0019288">
    <property type="term" value="P:isopentenyl diphosphate biosynthetic process, methylerythritol 4-phosphate pathway"/>
    <property type="evidence" value="ECO:0007669"/>
    <property type="project" value="UniProtKB-UniRule"/>
</dbReference>
<dbReference type="GO" id="GO:0016114">
    <property type="term" value="P:terpenoid biosynthetic process"/>
    <property type="evidence" value="ECO:0007669"/>
    <property type="project" value="UniProtKB-UniRule"/>
</dbReference>
<dbReference type="CDD" id="cd13944">
    <property type="entry name" value="lytB_ispH"/>
    <property type="match status" value="1"/>
</dbReference>
<dbReference type="FunFam" id="3.40.1010.20:FF:000001">
    <property type="entry name" value="4-hydroxy-3-methylbut-2-enyl diphosphate reductase"/>
    <property type="match status" value="1"/>
</dbReference>
<dbReference type="FunFam" id="3.40.50.11270:FF:000001">
    <property type="entry name" value="4-hydroxy-3-methylbut-2-enyl diphosphate reductase"/>
    <property type="match status" value="1"/>
</dbReference>
<dbReference type="Gene3D" id="3.40.50.11270">
    <property type="match status" value="1"/>
</dbReference>
<dbReference type="Gene3D" id="3.40.1010.20">
    <property type="entry name" value="4-hydroxy-3-methylbut-2-enyl diphosphate reductase, catalytic domain"/>
    <property type="match status" value="2"/>
</dbReference>
<dbReference type="HAMAP" id="MF_00191">
    <property type="entry name" value="IspH"/>
    <property type="match status" value="1"/>
</dbReference>
<dbReference type="InterPro" id="IPR003451">
    <property type="entry name" value="LytB/IspH"/>
</dbReference>
<dbReference type="NCBIfam" id="TIGR00216">
    <property type="entry name" value="ispH_lytB"/>
    <property type="match status" value="1"/>
</dbReference>
<dbReference type="NCBIfam" id="NF002188">
    <property type="entry name" value="PRK01045.1-2"/>
    <property type="match status" value="1"/>
</dbReference>
<dbReference type="NCBIfam" id="NF002190">
    <property type="entry name" value="PRK01045.1-4"/>
    <property type="match status" value="1"/>
</dbReference>
<dbReference type="PANTHER" id="PTHR30426">
    <property type="entry name" value="4-HYDROXY-3-METHYLBUT-2-ENYL DIPHOSPHATE REDUCTASE"/>
    <property type="match status" value="1"/>
</dbReference>
<dbReference type="PANTHER" id="PTHR30426:SF0">
    <property type="entry name" value="4-HYDROXY-3-METHYLBUT-2-ENYL DIPHOSPHATE REDUCTASE"/>
    <property type="match status" value="1"/>
</dbReference>
<dbReference type="Pfam" id="PF02401">
    <property type="entry name" value="LYTB"/>
    <property type="match status" value="1"/>
</dbReference>
<reference key="1">
    <citation type="journal article" date="2009" name="PLoS Genet.">
        <title>Organised genome dynamics in the Escherichia coli species results in highly diverse adaptive paths.</title>
        <authorList>
            <person name="Touchon M."/>
            <person name="Hoede C."/>
            <person name="Tenaillon O."/>
            <person name="Barbe V."/>
            <person name="Baeriswyl S."/>
            <person name="Bidet P."/>
            <person name="Bingen E."/>
            <person name="Bonacorsi S."/>
            <person name="Bouchier C."/>
            <person name="Bouvet O."/>
            <person name="Calteau A."/>
            <person name="Chiapello H."/>
            <person name="Clermont O."/>
            <person name="Cruveiller S."/>
            <person name="Danchin A."/>
            <person name="Diard M."/>
            <person name="Dossat C."/>
            <person name="Karoui M.E."/>
            <person name="Frapy E."/>
            <person name="Garry L."/>
            <person name="Ghigo J.M."/>
            <person name="Gilles A.M."/>
            <person name="Johnson J."/>
            <person name="Le Bouguenec C."/>
            <person name="Lescat M."/>
            <person name="Mangenot S."/>
            <person name="Martinez-Jehanne V."/>
            <person name="Matic I."/>
            <person name="Nassif X."/>
            <person name="Oztas S."/>
            <person name="Petit M.A."/>
            <person name="Pichon C."/>
            <person name="Rouy Z."/>
            <person name="Ruf C.S."/>
            <person name="Schneider D."/>
            <person name="Tourret J."/>
            <person name="Vacherie B."/>
            <person name="Vallenet D."/>
            <person name="Medigue C."/>
            <person name="Rocha E.P.C."/>
            <person name="Denamur E."/>
        </authorList>
    </citation>
    <scope>NUCLEOTIDE SEQUENCE [LARGE SCALE GENOMIC DNA]</scope>
    <source>
        <strain>ED1a</strain>
    </source>
</reference>
<keyword id="KW-0004">4Fe-4S</keyword>
<keyword id="KW-0408">Iron</keyword>
<keyword id="KW-0411">Iron-sulfur</keyword>
<keyword id="KW-0414">Isoprene biosynthesis</keyword>
<keyword id="KW-0479">Metal-binding</keyword>
<keyword id="KW-0560">Oxidoreductase</keyword>
<proteinExistence type="inferred from homology"/>
<feature type="chain" id="PRO_1000124285" description="4-hydroxy-3-methylbut-2-enyl diphosphate reductase">
    <location>
        <begin position="1"/>
        <end position="316"/>
    </location>
</feature>
<feature type="active site" description="Proton donor" evidence="1">
    <location>
        <position position="126"/>
    </location>
</feature>
<feature type="binding site" evidence="1">
    <location>
        <position position="12"/>
    </location>
    <ligand>
        <name>[4Fe-4S] cluster</name>
        <dbReference type="ChEBI" id="CHEBI:49883"/>
    </ligand>
</feature>
<feature type="binding site" evidence="1">
    <location>
        <position position="41"/>
    </location>
    <ligand>
        <name>(2E)-4-hydroxy-3-methylbut-2-enyl diphosphate</name>
        <dbReference type="ChEBI" id="CHEBI:128753"/>
    </ligand>
</feature>
<feature type="binding site" evidence="1">
    <location>
        <position position="41"/>
    </location>
    <ligand>
        <name>dimethylallyl diphosphate</name>
        <dbReference type="ChEBI" id="CHEBI:57623"/>
    </ligand>
</feature>
<feature type="binding site" evidence="1">
    <location>
        <position position="41"/>
    </location>
    <ligand>
        <name>isopentenyl diphosphate</name>
        <dbReference type="ChEBI" id="CHEBI:128769"/>
    </ligand>
</feature>
<feature type="binding site" evidence="1">
    <location>
        <position position="74"/>
    </location>
    <ligand>
        <name>(2E)-4-hydroxy-3-methylbut-2-enyl diphosphate</name>
        <dbReference type="ChEBI" id="CHEBI:128753"/>
    </ligand>
</feature>
<feature type="binding site" evidence="1">
    <location>
        <position position="74"/>
    </location>
    <ligand>
        <name>dimethylallyl diphosphate</name>
        <dbReference type="ChEBI" id="CHEBI:57623"/>
    </ligand>
</feature>
<feature type="binding site" evidence="1">
    <location>
        <position position="74"/>
    </location>
    <ligand>
        <name>isopentenyl diphosphate</name>
        <dbReference type="ChEBI" id="CHEBI:128769"/>
    </ligand>
</feature>
<feature type="binding site" evidence="1">
    <location>
        <position position="96"/>
    </location>
    <ligand>
        <name>[4Fe-4S] cluster</name>
        <dbReference type="ChEBI" id="CHEBI:49883"/>
    </ligand>
</feature>
<feature type="binding site" evidence="1">
    <location>
        <position position="124"/>
    </location>
    <ligand>
        <name>(2E)-4-hydroxy-3-methylbut-2-enyl diphosphate</name>
        <dbReference type="ChEBI" id="CHEBI:128753"/>
    </ligand>
</feature>
<feature type="binding site" evidence="1">
    <location>
        <position position="124"/>
    </location>
    <ligand>
        <name>dimethylallyl diphosphate</name>
        <dbReference type="ChEBI" id="CHEBI:57623"/>
    </ligand>
</feature>
<feature type="binding site" evidence="1">
    <location>
        <position position="124"/>
    </location>
    <ligand>
        <name>isopentenyl diphosphate</name>
        <dbReference type="ChEBI" id="CHEBI:128769"/>
    </ligand>
</feature>
<feature type="binding site" evidence="1">
    <location>
        <position position="167"/>
    </location>
    <ligand>
        <name>(2E)-4-hydroxy-3-methylbut-2-enyl diphosphate</name>
        <dbReference type="ChEBI" id="CHEBI:128753"/>
    </ligand>
</feature>
<feature type="binding site" evidence="1">
    <location>
        <position position="197"/>
    </location>
    <ligand>
        <name>[4Fe-4S] cluster</name>
        <dbReference type="ChEBI" id="CHEBI:49883"/>
    </ligand>
</feature>
<feature type="binding site" evidence="1">
    <location>
        <position position="225"/>
    </location>
    <ligand>
        <name>(2E)-4-hydroxy-3-methylbut-2-enyl diphosphate</name>
        <dbReference type="ChEBI" id="CHEBI:128753"/>
    </ligand>
</feature>
<feature type="binding site" evidence="1">
    <location>
        <position position="225"/>
    </location>
    <ligand>
        <name>dimethylallyl diphosphate</name>
        <dbReference type="ChEBI" id="CHEBI:57623"/>
    </ligand>
</feature>
<feature type="binding site" evidence="1">
    <location>
        <position position="225"/>
    </location>
    <ligand>
        <name>isopentenyl diphosphate</name>
        <dbReference type="ChEBI" id="CHEBI:128769"/>
    </ligand>
</feature>
<feature type="binding site" evidence="1">
    <location>
        <position position="226"/>
    </location>
    <ligand>
        <name>(2E)-4-hydroxy-3-methylbut-2-enyl diphosphate</name>
        <dbReference type="ChEBI" id="CHEBI:128753"/>
    </ligand>
</feature>
<feature type="binding site" evidence="1">
    <location>
        <position position="226"/>
    </location>
    <ligand>
        <name>dimethylallyl diphosphate</name>
        <dbReference type="ChEBI" id="CHEBI:57623"/>
    </ligand>
</feature>
<feature type="binding site" evidence="1">
    <location>
        <position position="226"/>
    </location>
    <ligand>
        <name>isopentenyl diphosphate</name>
        <dbReference type="ChEBI" id="CHEBI:128769"/>
    </ligand>
</feature>
<feature type="binding site" evidence="1">
    <location>
        <position position="227"/>
    </location>
    <ligand>
        <name>(2E)-4-hydroxy-3-methylbut-2-enyl diphosphate</name>
        <dbReference type="ChEBI" id="CHEBI:128753"/>
    </ligand>
</feature>
<feature type="binding site" evidence="1">
    <location>
        <position position="227"/>
    </location>
    <ligand>
        <name>dimethylallyl diphosphate</name>
        <dbReference type="ChEBI" id="CHEBI:57623"/>
    </ligand>
</feature>
<feature type="binding site" evidence="1">
    <location>
        <position position="227"/>
    </location>
    <ligand>
        <name>isopentenyl diphosphate</name>
        <dbReference type="ChEBI" id="CHEBI:128769"/>
    </ligand>
</feature>
<feature type="binding site" evidence="1">
    <location>
        <position position="269"/>
    </location>
    <ligand>
        <name>(2E)-4-hydroxy-3-methylbut-2-enyl diphosphate</name>
        <dbReference type="ChEBI" id="CHEBI:128753"/>
    </ligand>
</feature>
<feature type="binding site" evidence="1">
    <location>
        <position position="269"/>
    </location>
    <ligand>
        <name>dimethylallyl diphosphate</name>
        <dbReference type="ChEBI" id="CHEBI:57623"/>
    </ligand>
</feature>
<feature type="binding site" evidence="1">
    <location>
        <position position="269"/>
    </location>
    <ligand>
        <name>isopentenyl diphosphate</name>
        <dbReference type="ChEBI" id="CHEBI:128769"/>
    </ligand>
</feature>
<evidence type="ECO:0000255" key="1">
    <source>
        <dbReference type="HAMAP-Rule" id="MF_00191"/>
    </source>
</evidence>
<comment type="function">
    <text evidence="1">Catalyzes the conversion of 1-hydroxy-2-methyl-2-(E)-butenyl 4-diphosphate (HMBPP) into a mixture of isopentenyl diphosphate (IPP) and dimethylallyl diphosphate (DMAPP). Acts in the terminal step of the DOXP/MEP pathway for isoprenoid precursor biosynthesis.</text>
</comment>
<comment type="catalytic activity">
    <reaction evidence="1">
        <text>isopentenyl diphosphate + 2 oxidized [2Fe-2S]-[ferredoxin] + H2O = (2E)-4-hydroxy-3-methylbut-2-enyl diphosphate + 2 reduced [2Fe-2S]-[ferredoxin] + 2 H(+)</text>
        <dbReference type="Rhea" id="RHEA:24488"/>
        <dbReference type="Rhea" id="RHEA-COMP:10000"/>
        <dbReference type="Rhea" id="RHEA-COMP:10001"/>
        <dbReference type="ChEBI" id="CHEBI:15377"/>
        <dbReference type="ChEBI" id="CHEBI:15378"/>
        <dbReference type="ChEBI" id="CHEBI:33737"/>
        <dbReference type="ChEBI" id="CHEBI:33738"/>
        <dbReference type="ChEBI" id="CHEBI:128753"/>
        <dbReference type="ChEBI" id="CHEBI:128769"/>
        <dbReference type="EC" id="1.17.7.4"/>
    </reaction>
</comment>
<comment type="catalytic activity">
    <reaction evidence="1">
        <text>dimethylallyl diphosphate + 2 oxidized [2Fe-2S]-[ferredoxin] + H2O = (2E)-4-hydroxy-3-methylbut-2-enyl diphosphate + 2 reduced [2Fe-2S]-[ferredoxin] + 2 H(+)</text>
        <dbReference type="Rhea" id="RHEA:24825"/>
        <dbReference type="Rhea" id="RHEA-COMP:10000"/>
        <dbReference type="Rhea" id="RHEA-COMP:10001"/>
        <dbReference type="ChEBI" id="CHEBI:15377"/>
        <dbReference type="ChEBI" id="CHEBI:15378"/>
        <dbReference type="ChEBI" id="CHEBI:33737"/>
        <dbReference type="ChEBI" id="CHEBI:33738"/>
        <dbReference type="ChEBI" id="CHEBI:57623"/>
        <dbReference type="ChEBI" id="CHEBI:128753"/>
        <dbReference type="EC" id="1.17.7.4"/>
    </reaction>
</comment>
<comment type="cofactor">
    <cofactor evidence="1">
        <name>[4Fe-4S] cluster</name>
        <dbReference type="ChEBI" id="CHEBI:49883"/>
    </cofactor>
    <text evidence="1">Binds 1 [4Fe-4S] cluster per subunit.</text>
</comment>
<comment type="pathway">
    <text evidence="1">Isoprenoid biosynthesis; dimethylallyl diphosphate biosynthesis; dimethylallyl diphosphate from (2E)-4-hydroxy-3-methylbutenyl diphosphate: step 1/1.</text>
</comment>
<comment type="pathway">
    <text evidence="1">Isoprenoid biosynthesis; isopentenyl diphosphate biosynthesis via DXP pathway; isopentenyl diphosphate from 1-deoxy-D-xylulose 5-phosphate: step 6/6.</text>
</comment>
<comment type="subunit">
    <text evidence="1">Homodimer.</text>
</comment>
<comment type="similarity">
    <text evidence="1">Belongs to the IspH family.</text>
</comment>
<protein>
    <recommendedName>
        <fullName evidence="1">4-hydroxy-3-methylbut-2-enyl diphosphate reductase</fullName>
        <shortName evidence="1">HMBPP reductase</shortName>
        <ecNumber evidence="1">1.17.7.4</ecNumber>
    </recommendedName>
</protein>
<organism>
    <name type="scientific">Escherichia coli O81 (strain ED1a)</name>
    <dbReference type="NCBI Taxonomy" id="585397"/>
    <lineage>
        <taxon>Bacteria</taxon>
        <taxon>Pseudomonadati</taxon>
        <taxon>Pseudomonadota</taxon>
        <taxon>Gammaproteobacteria</taxon>
        <taxon>Enterobacterales</taxon>
        <taxon>Enterobacteriaceae</taxon>
        <taxon>Escherichia</taxon>
    </lineage>
</organism>